<reference key="1">
    <citation type="journal article" date="2007" name="Genes Dev.">
        <title>New insights into Acinetobacter baumannii pathogenesis revealed by high-density pyrosequencing and transposon mutagenesis.</title>
        <authorList>
            <person name="Smith M.G."/>
            <person name="Gianoulis T.A."/>
            <person name="Pukatzki S."/>
            <person name="Mekalanos J.J."/>
            <person name="Ornston L.N."/>
            <person name="Gerstein M."/>
            <person name="Snyder M."/>
        </authorList>
    </citation>
    <scope>NUCLEOTIDE SEQUENCE [LARGE SCALE GENOMIC DNA]</scope>
    <source>
        <strain>ATCC 17978 / DSM 105126 / CIP 53.77 / LMG 1025 / NCDC KC755 / 5377</strain>
    </source>
</reference>
<gene>
    <name evidence="1" type="primary">mnmC</name>
    <name type="ordered locus">A1S_2923</name>
</gene>
<comment type="function">
    <text evidence="1">Catalyzes the last two steps in the biosynthesis of 5-methylaminomethyl-2-thiouridine (mnm(5)s(2)U) at the wobble position (U34) in tRNA. Catalyzes the FAD-dependent demodification of cmnm(5)s(2)U34 to nm(5)s(2)U34, followed by the transfer of a methyl group from S-adenosyl-L-methionine to nm(5)s(2)U34, to form mnm(5)s(2)U34.</text>
</comment>
<comment type="catalytic activity">
    <reaction evidence="1">
        <text>5-aminomethyl-2-thiouridine(34) in tRNA + S-adenosyl-L-methionine = 5-methylaminomethyl-2-thiouridine(34) in tRNA + S-adenosyl-L-homocysteine + H(+)</text>
        <dbReference type="Rhea" id="RHEA:19569"/>
        <dbReference type="Rhea" id="RHEA-COMP:10195"/>
        <dbReference type="Rhea" id="RHEA-COMP:10197"/>
        <dbReference type="ChEBI" id="CHEBI:15378"/>
        <dbReference type="ChEBI" id="CHEBI:57856"/>
        <dbReference type="ChEBI" id="CHEBI:59789"/>
        <dbReference type="ChEBI" id="CHEBI:74454"/>
        <dbReference type="ChEBI" id="CHEBI:74455"/>
        <dbReference type="EC" id="2.1.1.61"/>
    </reaction>
</comment>
<comment type="cofactor">
    <cofactor evidence="1">
        <name>FAD</name>
        <dbReference type="ChEBI" id="CHEBI:57692"/>
    </cofactor>
</comment>
<comment type="subcellular location">
    <subcellularLocation>
        <location evidence="1">Cytoplasm</location>
    </subcellularLocation>
</comment>
<comment type="similarity">
    <text evidence="1">In the N-terminal section; belongs to the methyltransferase superfamily. tRNA (mnm(5)s(2)U34)-methyltransferase family.</text>
</comment>
<comment type="similarity">
    <text evidence="1">In the C-terminal section; belongs to the DAO family.</text>
</comment>
<keyword id="KW-0963">Cytoplasm</keyword>
<keyword id="KW-0274">FAD</keyword>
<keyword id="KW-0285">Flavoprotein</keyword>
<keyword id="KW-0489">Methyltransferase</keyword>
<keyword id="KW-0511">Multifunctional enzyme</keyword>
<keyword id="KW-0560">Oxidoreductase</keyword>
<keyword id="KW-0949">S-adenosyl-L-methionine</keyword>
<keyword id="KW-0808">Transferase</keyword>
<keyword id="KW-0819">tRNA processing</keyword>
<feature type="chain" id="PRO_0000347934" description="tRNA 5-methylaminomethyl-2-thiouridine biosynthesis bifunctional protein MnmC">
    <location>
        <begin position="1"/>
        <end position="623"/>
    </location>
</feature>
<feature type="region of interest" description="tRNA (mnm(5)s(2)U34)-methyltransferase">
    <location>
        <begin position="1"/>
        <end position="244"/>
    </location>
</feature>
<feature type="region of interest" description="FAD-dependent cmnm(5)s(2)U34 oxidoreductase">
    <location>
        <begin position="270"/>
        <end position="623"/>
    </location>
</feature>
<proteinExistence type="inferred from homology"/>
<accession>A3M8T4</accession>
<evidence type="ECO:0000255" key="1">
    <source>
        <dbReference type="HAMAP-Rule" id="MF_01102"/>
    </source>
</evidence>
<protein>
    <recommendedName>
        <fullName evidence="1">tRNA 5-methylaminomethyl-2-thiouridine biosynthesis bifunctional protein MnmC</fullName>
        <shortName evidence="1">tRNA mnm(5)s(2)U biosynthesis bifunctional protein</shortName>
    </recommendedName>
    <domain>
        <recommendedName>
            <fullName evidence="1">tRNA (mnm(5)s(2)U34)-methyltransferase</fullName>
            <ecNumber evidence="1">2.1.1.61</ecNumber>
        </recommendedName>
    </domain>
    <domain>
        <recommendedName>
            <fullName evidence="1">FAD-dependent cmnm(5)s(2)U34 oxidoreductase</fullName>
            <ecNumber evidence="1">1.5.-.-</ecNumber>
        </recommendedName>
    </domain>
</protein>
<name>MNMC_ACIBT</name>
<dbReference type="EC" id="2.1.1.61" evidence="1"/>
<dbReference type="EC" id="1.5.-.-" evidence="1"/>
<dbReference type="EMBL" id="CP000521">
    <property type="protein sequence ID" value="ABO13328.2"/>
    <property type="molecule type" value="Genomic_DNA"/>
</dbReference>
<dbReference type="RefSeq" id="WP_001043506.1">
    <property type="nucleotide sequence ID" value="NZ_CACVBA010000001.1"/>
</dbReference>
<dbReference type="SMR" id="A3M8T4"/>
<dbReference type="KEGG" id="acb:A1S_2923"/>
<dbReference type="HOGENOM" id="CLU_022427_2_0_6"/>
<dbReference type="GO" id="GO:0005737">
    <property type="term" value="C:cytoplasm"/>
    <property type="evidence" value="ECO:0007669"/>
    <property type="project" value="UniProtKB-SubCell"/>
</dbReference>
<dbReference type="GO" id="GO:0050660">
    <property type="term" value="F:flavin adenine dinucleotide binding"/>
    <property type="evidence" value="ECO:0007669"/>
    <property type="project" value="UniProtKB-UniRule"/>
</dbReference>
<dbReference type="GO" id="GO:0016645">
    <property type="term" value="F:oxidoreductase activity, acting on the CH-NH group of donors"/>
    <property type="evidence" value="ECO:0007669"/>
    <property type="project" value="InterPro"/>
</dbReference>
<dbReference type="GO" id="GO:0004808">
    <property type="term" value="F:tRNA (5-methylaminomethyl-2-thiouridylate)(34)-methyltransferase activity"/>
    <property type="evidence" value="ECO:0007669"/>
    <property type="project" value="UniProtKB-EC"/>
</dbReference>
<dbReference type="GO" id="GO:0032259">
    <property type="term" value="P:methylation"/>
    <property type="evidence" value="ECO:0007669"/>
    <property type="project" value="UniProtKB-KW"/>
</dbReference>
<dbReference type="GO" id="GO:0002097">
    <property type="term" value="P:tRNA wobble base modification"/>
    <property type="evidence" value="ECO:0007669"/>
    <property type="project" value="UniProtKB-UniRule"/>
</dbReference>
<dbReference type="Gene3D" id="3.30.9.10">
    <property type="entry name" value="D-Amino Acid Oxidase, subunit A, domain 2"/>
    <property type="match status" value="1"/>
</dbReference>
<dbReference type="Gene3D" id="3.50.50.60">
    <property type="entry name" value="FAD/NAD(P)-binding domain"/>
    <property type="match status" value="1"/>
</dbReference>
<dbReference type="Gene3D" id="3.40.50.150">
    <property type="entry name" value="Vaccinia Virus protein VP39"/>
    <property type="match status" value="1"/>
</dbReference>
<dbReference type="HAMAP" id="MF_01102">
    <property type="entry name" value="MnmC"/>
    <property type="match status" value="1"/>
</dbReference>
<dbReference type="InterPro" id="IPR006076">
    <property type="entry name" value="FAD-dep_OxRdtase"/>
</dbReference>
<dbReference type="InterPro" id="IPR036188">
    <property type="entry name" value="FAD/NAD-bd_sf"/>
</dbReference>
<dbReference type="InterPro" id="IPR008471">
    <property type="entry name" value="MnmC-like_methylTransf"/>
</dbReference>
<dbReference type="InterPro" id="IPR029063">
    <property type="entry name" value="SAM-dependent_MTases_sf"/>
</dbReference>
<dbReference type="InterPro" id="IPR023032">
    <property type="entry name" value="tRNA_MAMT_biosynth_bifunc_MnmC"/>
</dbReference>
<dbReference type="InterPro" id="IPR047785">
    <property type="entry name" value="tRNA_MNMC2"/>
</dbReference>
<dbReference type="InterPro" id="IPR017610">
    <property type="entry name" value="tRNA_S-uridine_synth_MnmC_C"/>
</dbReference>
<dbReference type="NCBIfam" id="TIGR03197">
    <property type="entry name" value="MnmC_Cterm"/>
    <property type="match status" value="1"/>
</dbReference>
<dbReference type="NCBIfam" id="NF033855">
    <property type="entry name" value="tRNA_MNMC2"/>
    <property type="match status" value="1"/>
</dbReference>
<dbReference type="PANTHER" id="PTHR13847">
    <property type="entry name" value="SARCOSINE DEHYDROGENASE-RELATED"/>
    <property type="match status" value="1"/>
</dbReference>
<dbReference type="PANTHER" id="PTHR13847:SF283">
    <property type="entry name" value="TRNA 5-METHYLAMINOMETHYL-2-THIOURIDINE BIOSYNTHESIS BIFUNCTIONAL PROTEIN MNMC"/>
    <property type="match status" value="1"/>
</dbReference>
<dbReference type="Pfam" id="PF01266">
    <property type="entry name" value="DAO"/>
    <property type="match status" value="1"/>
</dbReference>
<dbReference type="Pfam" id="PF05430">
    <property type="entry name" value="Methyltransf_30"/>
    <property type="match status" value="1"/>
</dbReference>
<dbReference type="SUPFAM" id="SSF54373">
    <property type="entry name" value="FAD-linked reductases, C-terminal domain"/>
    <property type="match status" value="1"/>
</dbReference>
<dbReference type="SUPFAM" id="SSF51971">
    <property type="entry name" value="Nucleotide-binding domain"/>
    <property type="match status" value="1"/>
</dbReference>
<organism>
    <name type="scientific">Acinetobacter baumannii (strain ATCC 17978 / DSM 105126 / CIP 53.77 / LMG 1025 / NCDC KC755 / 5377)</name>
    <dbReference type="NCBI Taxonomy" id="400667"/>
    <lineage>
        <taxon>Bacteria</taxon>
        <taxon>Pseudomonadati</taxon>
        <taxon>Pseudomonadota</taxon>
        <taxon>Gammaproteobacteria</taxon>
        <taxon>Moraxellales</taxon>
        <taxon>Moraxellaceae</taxon>
        <taxon>Acinetobacter</taxon>
        <taxon>Acinetobacter calcoaceticus/baumannii complex</taxon>
    </lineage>
</organism>
<sequence>MNKSNRIQTAELDWEFIDGIEVPISKQFGDVYFSKDNGLLETRHVFLNGNDLTERLANLQDFEYFSVGETGFGTGLNILALWQLWQQVRPNNHSHLHAISVEKFPLSKADLIRALNVWDELKPLSKQLIEQYPLPLAGCHRLSFPEERFSIDLWLGDAQDIFPSMVKTKAVNAWFLDGFAPSCNPDMWEQNVLNNIVRLSDYGTTFASFSVAGVLKRGLKAHGIDISRPRGFGHKREMLKAVWKAPVSEEILLEPVSDTLHFTQQHIAVIGAGIAGLSTAWAFAQRGHQVTLFERTAPLSGASGNPLALLNPKLCPIEQSHEHLMTLSWQHALNFYKNFQAFHPIQIQQMALKNAQDLLDLADQYPADIVTQQTSSLESDYPHILLTEAGAVSPHQLRAEILQHPSIELKIANITTFVSFENKVQLKSGNETTLEADHVVVCCARESAALFENYPLLKPIRGQVSWVDNSFATLPLNEAYSYGGYCMQLNTSELILGASFYPNRDDQEVLLDDHVHNFELIHSVFPHYAKQLPPVEQWQGRASVRAQSPDYFPVVGKMQKESRISTFAGLGSKGFLFAPLCSEVLVAQILGEACPVPKSLLQKLDAQRFQKKVKPKKPYFKSQ</sequence>